<comment type="function">
    <text evidence="1">One of the primary rRNA binding proteins, this protein initially binds near the 5'-end of the 23S rRNA. It is important during the early stages of 50S assembly. It makes multiple contacts with different domains of the 23S rRNA in the assembled 50S subunit and ribosome.</text>
</comment>
<comment type="function">
    <text evidence="1">Forms part of the polypeptide exit tunnel.</text>
</comment>
<comment type="subunit">
    <text evidence="1">Part of the 50S ribosomal subunit.</text>
</comment>
<comment type="similarity">
    <text evidence="1">Belongs to the universal ribosomal protein uL4 family.</text>
</comment>
<protein>
    <recommendedName>
        <fullName evidence="1">Large ribosomal subunit protein uL4</fullName>
    </recommendedName>
    <alternativeName>
        <fullName evidence="2">50S ribosomal protein L4</fullName>
    </alternativeName>
</protein>
<sequence>MEVNVVNIKNEVVGKVQLSAEVFGVQLRRDVLRDVVTWQLAKRRAGTHKTRCISDVSGTTAKPYRQKHTGRARQGSLRSPQFRGGAVVFGPVNRSHAYSLNKKVRRLGLKVALSMKVSDSKLVVLDDSGLLLEKTADAHVAFGNFGAHGSYLVVAETYEDKVMCACRNLPNVDLLKYAGINVLDILRHDCVILTVGTVKCLESRLCNG</sequence>
<proteinExistence type="inferred from homology"/>
<gene>
    <name evidence="1" type="primary">rplD</name>
    <name type="ordered locus">AM911</name>
</gene>
<keyword id="KW-0687">Ribonucleoprotein</keyword>
<keyword id="KW-0689">Ribosomal protein</keyword>
<keyword id="KW-0694">RNA-binding</keyword>
<keyword id="KW-0699">rRNA-binding</keyword>
<reference key="1">
    <citation type="journal article" date="2005" name="Proc. Natl. Acad. Sci. U.S.A.">
        <title>Complete genome sequencing of Anaplasma marginale reveals that the surface is skewed to two superfamilies of outer membrane proteins.</title>
        <authorList>
            <person name="Brayton K.A."/>
            <person name="Kappmeyer L.S."/>
            <person name="Herndon D.R."/>
            <person name="Dark M.J."/>
            <person name="Tibbals D.L."/>
            <person name="Palmer G.H."/>
            <person name="McGuire T.C."/>
            <person name="Knowles D.P. Jr."/>
        </authorList>
    </citation>
    <scope>NUCLEOTIDE SEQUENCE [LARGE SCALE GENOMIC DNA]</scope>
    <source>
        <strain>St. Maries</strain>
    </source>
</reference>
<feature type="chain" id="PRO_0000242333" description="Large ribosomal subunit protein uL4">
    <location>
        <begin position="1"/>
        <end position="208"/>
    </location>
</feature>
<accession>Q5PA59</accession>
<name>RL4_ANAMM</name>
<dbReference type="EMBL" id="CP000030">
    <property type="protein sequence ID" value="AAV86821.1"/>
    <property type="molecule type" value="Genomic_DNA"/>
</dbReference>
<dbReference type="RefSeq" id="WP_011114492.1">
    <property type="nucleotide sequence ID" value="NZ_AFMU01000034.1"/>
</dbReference>
<dbReference type="SMR" id="Q5PA59"/>
<dbReference type="GeneID" id="7397877"/>
<dbReference type="KEGG" id="ama:AM911"/>
<dbReference type="PATRIC" id="fig|320483.3.peg.788"/>
<dbReference type="HOGENOM" id="CLU_041575_5_1_5"/>
<dbReference type="GO" id="GO:1990904">
    <property type="term" value="C:ribonucleoprotein complex"/>
    <property type="evidence" value="ECO:0007669"/>
    <property type="project" value="UniProtKB-KW"/>
</dbReference>
<dbReference type="GO" id="GO:0005840">
    <property type="term" value="C:ribosome"/>
    <property type="evidence" value="ECO:0007669"/>
    <property type="project" value="UniProtKB-KW"/>
</dbReference>
<dbReference type="GO" id="GO:0019843">
    <property type="term" value="F:rRNA binding"/>
    <property type="evidence" value="ECO:0007669"/>
    <property type="project" value="UniProtKB-UniRule"/>
</dbReference>
<dbReference type="GO" id="GO:0003735">
    <property type="term" value="F:structural constituent of ribosome"/>
    <property type="evidence" value="ECO:0007669"/>
    <property type="project" value="InterPro"/>
</dbReference>
<dbReference type="GO" id="GO:0006412">
    <property type="term" value="P:translation"/>
    <property type="evidence" value="ECO:0007669"/>
    <property type="project" value="UniProtKB-UniRule"/>
</dbReference>
<dbReference type="Gene3D" id="3.40.1370.10">
    <property type="match status" value="1"/>
</dbReference>
<dbReference type="HAMAP" id="MF_01328_B">
    <property type="entry name" value="Ribosomal_uL4_B"/>
    <property type="match status" value="1"/>
</dbReference>
<dbReference type="InterPro" id="IPR002136">
    <property type="entry name" value="Ribosomal_uL4"/>
</dbReference>
<dbReference type="InterPro" id="IPR013005">
    <property type="entry name" value="Ribosomal_uL4-like"/>
</dbReference>
<dbReference type="InterPro" id="IPR023574">
    <property type="entry name" value="Ribosomal_uL4_dom_sf"/>
</dbReference>
<dbReference type="NCBIfam" id="TIGR03953">
    <property type="entry name" value="rplD_bact"/>
    <property type="match status" value="1"/>
</dbReference>
<dbReference type="PANTHER" id="PTHR10746">
    <property type="entry name" value="50S RIBOSOMAL PROTEIN L4"/>
    <property type="match status" value="1"/>
</dbReference>
<dbReference type="PANTHER" id="PTHR10746:SF6">
    <property type="entry name" value="LARGE RIBOSOMAL SUBUNIT PROTEIN UL4M"/>
    <property type="match status" value="1"/>
</dbReference>
<dbReference type="Pfam" id="PF00573">
    <property type="entry name" value="Ribosomal_L4"/>
    <property type="match status" value="1"/>
</dbReference>
<dbReference type="SUPFAM" id="SSF52166">
    <property type="entry name" value="Ribosomal protein L4"/>
    <property type="match status" value="1"/>
</dbReference>
<evidence type="ECO:0000255" key="1">
    <source>
        <dbReference type="HAMAP-Rule" id="MF_01328"/>
    </source>
</evidence>
<evidence type="ECO:0000305" key="2"/>
<organism>
    <name type="scientific">Anaplasma marginale (strain St. Maries)</name>
    <dbReference type="NCBI Taxonomy" id="234826"/>
    <lineage>
        <taxon>Bacteria</taxon>
        <taxon>Pseudomonadati</taxon>
        <taxon>Pseudomonadota</taxon>
        <taxon>Alphaproteobacteria</taxon>
        <taxon>Rickettsiales</taxon>
        <taxon>Anaplasmataceae</taxon>
        <taxon>Anaplasma</taxon>
    </lineage>
</organism>